<sequence>MSFRTQPPAPARLNRCQLFGPGSRPAIFEKMAQSAADVINLDLEDSVAPDDKPQARRNIIEASHNIDWGNKYLSVRINGLDTPFWYRDVVELLEDGSERIDQIMIPKVGCAADVYAVDALVTAIEAAKGRKKRISLEVIIESAAGIAHVEEIAAASPRLQAMSLGAADFAASMGMATTGIGGTQENYYMLHAGVKHWSDPWHWAQAAIVAACRTHGILPVDGPFGDFSDDEGFRAQALRSATLGMVGKWAIHPKQVALANEVFTPSDAAVAEAREILAAMEKAKAEGAGATVYKGRLVDIASIRQAEVIVRQAEMAKV</sequence>
<gene>
    <name evidence="2" type="primary">mcl1</name>
    <name type="ordered locus">RCAP_rcc03164</name>
</gene>
<comment type="function">
    <text evidence="1">Involved in the ethylmalonyl-CoA pathway for acetate assimilation. Catalyzes the reversible condensation of glyoxylate and acetyl-CoA to L-malyl-CoA and the reversible condensation of glyoxylate and propionyl-CoA to yield beta-methylmalyl-CoA.</text>
</comment>
<comment type="catalytic activity">
    <reaction evidence="1">
        <text>(S)-malyl-CoA = glyoxylate + acetyl-CoA</text>
        <dbReference type="Rhea" id="RHEA:16629"/>
        <dbReference type="ChEBI" id="CHEBI:36655"/>
        <dbReference type="ChEBI" id="CHEBI:57288"/>
        <dbReference type="ChEBI" id="CHEBI:57317"/>
        <dbReference type="EC" id="4.1.3.24"/>
    </reaction>
</comment>
<comment type="catalytic activity">
    <reaction evidence="1">
        <text>(2R,3S)-beta-methylmalyl-CoA = propanoyl-CoA + glyoxylate</text>
        <dbReference type="Rhea" id="RHEA:38259"/>
        <dbReference type="ChEBI" id="CHEBI:36655"/>
        <dbReference type="ChEBI" id="CHEBI:57392"/>
        <dbReference type="ChEBI" id="CHEBI:75634"/>
        <dbReference type="EC" id="4.1.3.24"/>
    </reaction>
</comment>
<comment type="cofactor">
    <cofactor evidence="1">
        <name>Mg(2+)</name>
        <dbReference type="ChEBI" id="CHEBI:18420"/>
    </cofactor>
    <cofactor evidence="1">
        <name>Mn(2+)</name>
        <dbReference type="ChEBI" id="CHEBI:29035"/>
    </cofactor>
    <text evidence="1">Divalent cations such as magnesium or manganese.</text>
</comment>
<comment type="subunit">
    <text evidence="1">Homohexamer. Dimer of trimers.</text>
</comment>
<comment type="similarity">
    <text evidence="3">Belongs to the HpcH/HpaI aldolase family.</text>
</comment>
<keyword id="KW-0456">Lyase</keyword>
<keyword id="KW-0460">Magnesium</keyword>
<keyword id="KW-0464">Manganese</keyword>
<keyword id="KW-0479">Metal-binding</keyword>
<keyword id="KW-1185">Reference proteome</keyword>
<evidence type="ECO:0000250" key="1">
    <source>
        <dbReference type="UniProtKB" id="B6E2X2"/>
    </source>
</evidence>
<evidence type="ECO:0000250" key="2">
    <source>
        <dbReference type="UniProtKB" id="Q3J5L6"/>
    </source>
</evidence>
<evidence type="ECO:0000305" key="3"/>
<evidence type="ECO:0000312" key="4">
    <source>
        <dbReference type="EMBL" id="ADE86888.1"/>
    </source>
</evidence>
<protein>
    <recommendedName>
        <fullName evidence="1">L-malyl-CoA/beta-methylmalyl-CoA lyase</fullName>
        <ecNumber evidence="1">4.1.3.24</ecNumber>
    </recommendedName>
    <alternativeName>
        <fullName evidence="2">(3S)-malyl-CoA/beta-methylmalyl-CoA lyase</fullName>
    </alternativeName>
</protein>
<dbReference type="EC" id="4.1.3.24" evidence="1"/>
<dbReference type="EMBL" id="CP001312">
    <property type="protein sequence ID" value="ADE86888.1"/>
    <property type="molecule type" value="Genomic_DNA"/>
</dbReference>
<dbReference type="RefSeq" id="WP_013068861.1">
    <property type="nucleotide sequence ID" value="NC_014034.1"/>
</dbReference>
<dbReference type="SMR" id="D5AR83"/>
<dbReference type="STRING" id="272942.RCAP_rcc03164"/>
<dbReference type="GeneID" id="31491951"/>
<dbReference type="KEGG" id="rcp:RCAP_rcc03164"/>
<dbReference type="eggNOG" id="COG2301">
    <property type="taxonomic scope" value="Bacteria"/>
</dbReference>
<dbReference type="HOGENOM" id="CLU_044864_0_1_5"/>
<dbReference type="OrthoDB" id="9800547at2"/>
<dbReference type="Proteomes" id="UP000002361">
    <property type="component" value="Chromosome"/>
</dbReference>
<dbReference type="GO" id="GO:0043959">
    <property type="term" value="F:L-erythro-3-methylmalyl-CoA lyase activity"/>
    <property type="evidence" value="ECO:0007669"/>
    <property type="project" value="RHEA"/>
</dbReference>
<dbReference type="GO" id="GO:0000287">
    <property type="term" value="F:magnesium ion binding"/>
    <property type="evidence" value="ECO:0007669"/>
    <property type="project" value="TreeGrafter"/>
</dbReference>
<dbReference type="GO" id="GO:0050083">
    <property type="term" value="F:malyl-CoA lyase activity"/>
    <property type="evidence" value="ECO:0000250"/>
    <property type="project" value="UniProtKB"/>
</dbReference>
<dbReference type="GO" id="GO:0046872">
    <property type="term" value="F:metal ion binding"/>
    <property type="evidence" value="ECO:0000250"/>
    <property type="project" value="UniProtKB"/>
</dbReference>
<dbReference type="GO" id="GO:0006107">
    <property type="term" value="P:oxaloacetate metabolic process"/>
    <property type="evidence" value="ECO:0007669"/>
    <property type="project" value="TreeGrafter"/>
</dbReference>
<dbReference type="Gene3D" id="3.20.20.60">
    <property type="entry name" value="Phosphoenolpyruvate-binding domains"/>
    <property type="match status" value="1"/>
</dbReference>
<dbReference type="InterPro" id="IPR005000">
    <property type="entry name" value="Aldolase/citrate-lyase_domain"/>
</dbReference>
<dbReference type="InterPro" id="IPR011206">
    <property type="entry name" value="Citrate_lyase_beta/mcl1/mcl2"/>
</dbReference>
<dbReference type="InterPro" id="IPR015813">
    <property type="entry name" value="Pyrv/PenolPyrv_kinase-like_dom"/>
</dbReference>
<dbReference type="InterPro" id="IPR040442">
    <property type="entry name" value="Pyrv_kinase-like_dom_sf"/>
</dbReference>
<dbReference type="PANTHER" id="PTHR32308:SF10">
    <property type="entry name" value="CITRATE LYASE SUBUNIT BETA"/>
    <property type="match status" value="1"/>
</dbReference>
<dbReference type="PANTHER" id="PTHR32308">
    <property type="entry name" value="LYASE BETA SUBUNIT, PUTATIVE (AFU_ORTHOLOGUE AFUA_4G13030)-RELATED"/>
    <property type="match status" value="1"/>
</dbReference>
<dbReference type="Pfam" id="PF03328">
    <property type="entry name" value="HpcH_HpaI"/>
    <property type="match status" value="1"/>
</dbReference>
<dbReference type="PIRSF" id="PIRSF015582">
    <property type="entry name" value="Cit_lyase_B"/>
    <property type="match status" value="1"/>
</dbReference>
<dbReference type="SUPFAM" id="SSF51621">
    <property type="entry name" value="Phosphoenolpyruvate/pyruvate domain"/>
    <property type="match status" value="1"/>
</dbReference>
<name>MCAL_RHOCB</name>
<feature type="initiator methionine" description="Removed" evidence="1">
    <location>
        <position position="1"/>
    </location>
</feature>
<feature type="chain" id="PRO_0000404700" description="L-malyl-CoA/beta-methylmalyl-CoA lyase">
    <location>
        <begin position="2"/>
        <end position="318"/>
    </location>
</feature>
<feature type="binding site" evidence="2">
    <location>
        <position position="19"/>
    </location>
    <ligand>
        <name>substrate</name>
    </ligand>
</feature>
<feature type="binding site" evidence="2">
    <location>
        <position position="24"/>
    </location>
    <ligand>
        <name>substrate</name>
    </ligand>
</feature>
<feature type="binding site" evidence="2">
    <location>
        <position position="30"/>
    </location>
    <ligand>
        <name>substrate</name>
    </ligand>
</feature>
<feature type="binding site" evidence="2">
    <location>
        <position position="76"/>
    </location>
    <ligand>
        <name>substrate</name>
    </ligand>
</feature>
<feature type="binding site" evidence="2">
    <location>
        <position position="141"/>
    </location>
    <ligand>
        <name>Mg(2+)</name>
        <dbReference type="ChEBI" id="CHEBI:18420"/>
    </ligand>
</feature>
<feature type="binding site" evidence="2">
    <location>
        <begin position="167"/>
        <end position="168"/>
    </location>
    <ligand>
        <name>substrate</name>
    </ligand>
</feature>
<feature type="binding site" evidence="2">
    <location>
        <position position="168"/>
    </location>
    <ligand>
        <name>Mg(2+)</name>
        <dbReference type="ChEBI" id="CHEBI:18420"/>
    </ligand>
</feature>
<feature type="binding site" evidence="2">
    <location>
        <begin position="251"/>
        <end position="252"/>
    </location>
    <ligand>
        <name>substrate</name>
    </ligand>
</feature>
<accession>D5AR83</accession>
<reference evidence="4" key="1">
    <citation type="journal article" date="2010" name="J. Bacteriol.">
        <title>Complete genome sequence of the photosynthetic purple nonsulfur bacterium Rhodobacter capsulatus SB 1003.</title>
        <authorList>
            <person name="Strnad H."/>
            <person name="Lapidus A."/>
            <person name="Paces J."/>
            <person name="Ulbrich P."/>
            <person name="Vlcek C."/>
            <person name="Paces V."/>
            <person name="Haselkorn R."/>
        </authorList>
    </citation>
    <scope>NUCLEOTIDE SEQUENCE [LARGE SCALE GENOMIC DNA]</scope>
    <source>
        <strain>ATCC BAA-309 / NBRC 16581 / SB1003</strain>
    </source>
</reference>
<proteinExistence type="inferred from homology"/>
<organism>
    <name type="scientific">Rhodobacter capsulatus (strain ATCC BAA-309 / NBRC 16581 / SB1003)</name>
    <dbReference type="NCBI Taxonomy" id="272942"/>
    <lineage>
        <taxon>Bacteria</taxon>
        <taxon>Pseudomonadati</taxon>
        <taxon>Pseudomonadota</taxon>
        <taxon>Alphaproteobacteria</taxon>
        <taxon>Rhodobacterales</taxon>
        <taxon>Rhodobacter group</taxon>
        <taxon>Rhodobacter</taxon>
    </lineage>
</organism>